<sequence>MVDKSQETTHFGFQTVAKEQKADMVAHVFHSVASKYDVMNDLMSFGIHRLWKRFTIDCSGVRRGQTVLDLAGGTGDLTAKFSRLVGETGKVVLADINESMLKMGREKLRNIGVIGNVEYVQANAEALPFPDNTFDCITISFGLRNVTDKDKALRSMYRVLKPGGRLLVLEFSKPIIEPLSKAYDAYSFHVLPRIGSLVANDADSYRYLAESIRMHPDQDTLKAMMQDAGFESVDYYNLTAGVVALHRGYKF</sequence>
<protein>
    <recommendedName>
        <fullName evidence="1">Ubiquinone/menaquinone biosynthesis C-methyltransferase UbiE</fullName>
        <ecNumber evidence="1 4">2.1.1.163</ecNumber>
        <ecNumber evidence="1 4">2.1.1.201</ecNumber>
    </recommendedName>
    <alternativeName>
        <fullName evidence="1">2-methoxy-6-polyprenyl-1,4-benzoquinol methylase</fullName>
    </alternativeName>
    <alternativeName>
        <fullName evidence="1">Demethylmenaquinone methyltransferase</fullName>
    </alternativeName>
</protein>
<dbReference type="EC" id="2.1.1.163" evidence="1 4"/>
<dbReference type="EC" id="2.1.1.201" evidence="1 4"/>
<dbReference type="EMBL" id="M87049">
    <property type="protein sequence ID" value="AAA67628.1"/>
    <property type="molecule type" value="Genomic_DNA"/>
</dbReference>
<dbReference type="EMBL" id="U00096">
    <property type="protein sequence ID" value="AAT48227.1"/>
    <property type="molecule type" value="Genomic_DNA"/>
</dbReference>
<dbReference type="EMBL" id="AP009048">
    <property type="protein sequence ID" value="BAE77468.1"/>
    <property type="molecule type" value="Genomic_DNA"/>
</dbReference>
<dbReference type="PIR" id="B65188">
    <property type="entry name" value="B65188"/>
</dbReference>
<dbReference type="RefSeq" id="WP_000227958.1">
    <property type="nucleotide sequence ID" value="NZ_STEB01000021.1"/>
</dbReference>
<dbReference type="RefSeq" id="YP_026269.1">
    <property type="nucleotide sequence ID" value="NC_000913.3"/>
</dbReference>
<dbReference type="SMR" id="P0A887"/>
<dbReference type="BioGRID" id="4261082">
    <property type="interactions" value="541"/>
</dbReference>
<dbReference type="BioGRID" id="853202">
    <property type="interactions" value="2"/>
</dbReference>
<dbReference type="DIP" id="DIP-31831N"/>
<dbReference type="FunCoup" id="P0A887">
    <property type="interactions" value="701"/>
</dbReference>
<dbReference type="IntAct" id="P0A887">
    <property type="interactions" value="6"/>
</dbReference>
<dbReference type="STRING" id="511145.b3833"/>
<dbReference type="SwissLipids" id="SLP:000001505"/>
<dbReference type="jPOST" id="P0A887"/>
<dbReference type="PaxDb" id="511145-b3833"/>
<dbReference type="EnsemblBacteria" id="AAT48227">
    <property type="protein sequence ID" value="AAT48227"/>
    <property type="gene ID" value="b3833"/>
</dbReference>
<dbReference type="GeneID" id="93778102"/>
<dbReference type="GeneID" id="948926"/>
<dbReference type="KEGG" id="ecj:JW5581"/>
<dbReference type="KEGG" id="eco:b3833"/>
<dbReference type="KEGG" id="ecoc:C3026_20740"/>
<dbReference type="PATRIC" id="fig|1411691.4.peg.2875"/>
<dbReference type="EchoBASE" id="EB1441"/>
<dbReference type="eggNOG" id="COG2226">
    <property type="taxonomic scope" value="Bacteria"/>
</dbReference>
<dbReference type="HOGENOM" id="CLU_037990_0_0_6"/>
<dbReference type="InParanoid" id="P0A887"/>
<dbReference type="OMA" id="MNDVMSM"/>
<dbReference type="OrthoDB" id="9808140at2"/>
<dbReference type="PhylomeDB" id="P0A887"/>
<dbReference type="BioCyc" id="EcoCyc:2-OCTAPRENYL-METHOXY-BENZOQ-METH-MONOMER"/>
<dbReference type="BioCyc" id="MetaCyc:2-OCTAPRENYL-METHOXY-BENZOQ-METH-MONOMER"/>
<dbReference type="BRENDA" id="2.1.1.163">
    <property type="organism ID" value="2026"/>
</dbReference>
<dbReference type="UniPathway" id="UPA00079">
    <property type="reaction ID" value="UER00169"/>
</dbReference>
<dbReference type="UniPathway" id="UPA00232"/>
<dbReference type="PRO" id="PR:P0A887"/>
<dbReference type="Proteomes" id="UP000000625">
    <property type="component" value="Chromosome"/>
</dbReference>
<dbReference type="GO" id="GO:0005737">
    <property type="term" value="C:cytoplasm"/>
    <property type="evidence" value="ECO:0007669"/>
    <property type="project" value="UniProtKB-SubCell"/>
</dbReference>
<dbReference type="GO" id="GO:0110142">
    <property type="term" value="C:ubiquinone biosynthesis complex"/>
    <property type="evidence" value="ECO:0000314"/>
    <property type="project" value="EcoCyc"/>
</dbReference>
<dbReference type="GO" id="GO:0008425">
    <property type="term" value="F:2-methoxy-6-polyprenyl-1,4-benzoquinol methyltransferase activity"/>
    <property type="evidence" value="ECO:0000315"/>
    <property type="project" value="EcoCyc"/>
</dbReference>
<dbReference type="GO" id="GO:0043770">
    <property type="term" value="F:demethylmenaquinone methyltransferase activity"/>
    <property type="evidence" value="ECO:0007669"/>
    <property type="project" value="UniProtKB-UniRule"/>
</dbReference>
<dbReference type="GO" id="GO:0009060">
    <property type="term" value="P:aerobic respiration"/>
    <property type="evidence" value="ECO:0007669"/>
    <property type="project" value="UniProtKB-UniRule"/>
</dbReference>
<dbReference type="GO" id="GO:0009234">
    <property type="term" value="P:menaquinone biosynthetic process"/>
    <property type="evidence" value="ECO:0000315"/>
    <property type="project" value="EcoCyc"/>
</dbReference>
<dbReference type="GO" id="GO:0032259">
    <property type="term" value="P:methylation"/>
    <property type="evidence" value="ECO:0007669"/>
    <property type="project" value="UniProtKB-KW"/>
</dbReference>
<dbReference type="GO" id="GO:0006744">
    <property type="term" value="P:ubiquinone biosynthetic process"/>
    <property type="evidence" value="ECO:0000315"/>
    <property type="project" value="EcoCyc"/>
</dbReference>
<dbReference type="CDD" id="cd02440">
    <property type="entry name" value="AdoMet_MTases"/>
    <property type="match status" value="1"/>
</dbReference>
<dbReference type="FunFam" id="3.40.50.150:FF:000014">
    <property type="entry name" value="Ubiquinone/menaquinone biosynthesis C-methyltransferase UbiE"/>
    <property type="match status" value="1"/>
</dbReference>
<dbReference type="Gene3D" id="3.40.50.150">
    <property type="entry name" value="Vaccinia Virus protein VP39"/>
    <property type="match status" value="1"/>
</dbReference>
<dbReference type="HAMAP" id="MF_01813">
    <property type="entry name" value="MenG_UbiE_methyltr"/>
    <property type="match status" value="1"/>
</dbReference>
<dbReference type="InterPro" id="IPR029063">
    <property type="entry name" value="SAM-dependent_MTases_sf"/>
</dbReference>
<dbReference type="InterPro" id="IPR004033">
    <property type="entry name" value="UbiE/COQ5_MeTrFase"/>
</dbReference>
<dbReference type="InterPro" id="IPR023576">
    <property type="entry name" value="UbiE/COQ5_MeTrFase_CS"/>
</dbReference>
<dbReference type="NCBIfam" id="TIGR01934">
    <property type="entry name" value="MenG_MenH_UbiE"/>
    <property type="match status" value="1"/>
</dbReference>
<dbReference type="NCBIfam" id="NF001240">
    <property type="entry name" value="PRK00216.1-1"/>
    <property type="match status" value="1"/>
</dbReference>
<dbReference type="NCBIfam" id="NF001242">
    <property type="entry name" value="PRK00216.1-3"/>
    <property type="match status" value="1"/>
</dbReference>
<dbReference type="NCBIfam" id="NF001244">
    <property type="entry name" value="PRK00216.1-5"/>
    <property type="match status" value="1"/>
</dbReference>
<dbReference type="PANTHER" id="PTHR43591:SF24">
    <property type="entry name" value="2-METHOXY-6-POLYPRENYL-1,4-BENZOQUINOL METHYLASE, MITOCHONDRIAL"/>
    <property type="match status" value="1"/>
</dbReference>
<dbReference type="PANTHER" id="PTHR43591">
    <property type="entry name" value="METHYLTRANSFERASE"/>
    <property type="match status" value="1"/>
</dbReference>
<dbReference type="Pfam" id="PF01209">
    <property type="entry name" value="Ubie_methyltran"/>
    <property type="match status" value="1"/>
</dbReference>
<dbReference type="SUPFAM" id="SSF53335">
    <property type="entry name" value="S-adenosyl-L-methionine-dependent methyltransferases"/>
    <property type="match status" value="1"/>
</dbReference>
<dbReference type="PROSITE" id="PS51608">
    <property type="entry name" value="SAM_MT_UBIE"/>
    <property type="match status" value="1"/>
</dbReference>
<dbReference type="PROSITE" id="PS01183">
    <property type="entry name" value="UBIE_1"/>
    <property type="match status" value="1"/>
</dbReference>
<dbReference type="PROSITE" id="PS01184">
    <property type="entry name" value="UBIE_2"/>
    <property type="match status" value="1"/>
</dbReference>
<organism>
    <name type="scientific">Escherichia coli (strain K12)</name>
    <dbReference type="NCBI Taxonomy" id="83333"/>
    <lineage>
        <taxon>Bacteria</taxon>
        <taxon>Pseudomonadati</taxon>
        <taxon>Pseudomonadota</taxon>
        <taxon>Gammaproteobacteria</taxon>
        <taxon>Enterobacterales</taxon>
        <taxon>Enterobacteriaceae</taxon>
        <taxon>Escherichia</taxon>
    </lineage>
</organism>
<reference key="1">
    <citation type="journal article" date="1992" name="Science">
        <title>Analysis of the Escherichia coli genome: DNA sequence of the region from 84.5 to 86.5 minutes.</title>
        <authorList>
            <person name="Daniels D.L."/>
            <person name="Plunkett G. III"/>
            <person name="Burland V.D."/>
            <person name="Blattner F.R."/>
        </authorList>
    </citation>
    <scope>NUCLEOTIDE SEQUENCE [LARGE SCALE GENOMIC DNA]</scope>
    <source>
        <strain>K12 / MG1655 / ATCC 47076</strain>
    </source>
</reference>
<reference key="2">
    <citation type="journal article" date="1997" name="Science">
        <title>The complete genome sequence of Escherichia coli K-12.</title>
        <authorList>
            <person name="Blattner F.R."/>
            <person name="Plunkett G. III"/>
            <person name="Bloch C.A."/>
            <person name="Perna N.T."/>
            <person name="Burland V."/>
            <person name="Riley M."/>
            <person name="Collado-Vides J."/>
            <person name="Glasner J.D."/>
            <person name="Rode C.K."/>
            <person name="Mayhew G.F."/>
            <person name="Gregor J."/>
            <person name="Davis N.W."/>
            <person name="Kirkpatrick H.A."/>
            <person name="Goeden M.A."/>
            <person name="Rose D.J."/>
            <person name="Mau B."/>
            <person name="Shao Y."/>
        </authorList>
    </citation>
    <scope>NUCLEOTIDE SEQUENCE [LARGE SCALE GENOMIC DNA]</scope>
    <source>
        <strain>K12 / MG1655 / ATCC 47076</strain>
    </source>
</reference>
<reference key="3">
    <citation type="journal article" date="2006" name="Nucleic Acids Res.">
        <title>Escherichia coli K-12: a cooperatively developed annotation snapshot -- 2005.</title>
        <authorList>
            <person name="Riley M."/>
            <person name="Abe T."/>
            <person name="Arnaud M.B."/>
            <person name="Berlyn M.K.B."/>
            <person name="Blattner F.R."/>
            <person name="Chaudhuri R.R."/>
            <person name="Glasner J.D."/>
            <person name="Horiuchi T."/>
            <person name="Keseler I.M."/>
            <person name="Kosuge T."/>
            <person name="Mori H."/>
            <person name="Perna N.T."/>
            <person name="Plunkett G. III"/>
            <person name="Rudd K.E."/>
            <person name="Serres M.H."/>
            <person name="Thomas G.H."/>
            <person name="Thomson N.R."/>
            <person name="Wishart D."/>
            <person name="Wanner B.L."/>
        </authorList>
    </citation>
    <scope>SEQUENCE REVISION TO 101</scope>
</reference>
<reference key="4">
    <citation type="journal article" date="2006" name="Mol. Syst. Biol.">
        <title>Highly accurate genome sequences of Escherichia coli K-12 strains MG1655 and W3110.</title>
        <authorList>
            <person name="Hayashi K."/>
            <person name="Morooka N."/>
            <person name="Yamamoto Y."/>
            <person name="Fujita K."/>
            <person name="Isono K."/>
            <person name="Choi S."/>
            <person name="Ohtsubo E."/>
            <person name="Baba T."/>
            <person name="Wanner B.L."/>
            <person name="Mori H."/>
            <person name="Horiuchi T."/>
        </authorList>
    </citation>
    <scope>NUCLEOTIDE SEQUENCE [LARGE SCALE GENOMIC DNA]</scope>
    <source>
        <strain>K12 / W3110 / ATCC 27325 / DSM 5911</strain>
    </source>
</reference>
<reference key="5">
    <citation type="journal article" date="1997" name="J. Bacteriol.">
        <title>A C-methyltransferase involved in both ubiquinone and menaquinone biosynthesis: isolation and identification of the Escherichia coli ubiE gene.</title>
        <authorList>
            <person name="Lee P.T."/>
            <person name="Hsu A.Y."/>
            <person name="Ha H.T."/>
            <person name="Clarke C.F."/>
        </authorList>
    </citation>
    <scope>FUNCTION</scope>
    <scope>CATALYTIC ACTIVITY</scope>
    <scope>PATHWAY</scope>
    <scope>MUTANT UBIE401</scope>
</reference>
<reference key="6">
    <citation type="journal article" date="2015" name="Plant Cell">
        <title>A dedicated type II NADPH dehydrogenase performs the penultimate step in the biosynthesis of vitamin K1 in Synechocystis and Arabidopsis.</title>
        <authorList>
            <person name="Fatihi A."/>
            <person name="Latimer S."/>
            <person name="Schmollinger S."/>
            <person name="Block A."/>
            <person name="Dussault P.H."/>
            <person name="Vermaas W.F."/>
            <person name="Merchant S.S."/>
            <person name="Basset G.J."/>
        </authorList>
    </citation>
    <scope>FUNCTION</scope>
</reference>
<reference key="7">
    <citation type="journal article" date="2019" name="Cell Chem. Biol.">
        <title>A soluble metabolon synthesizes the isoprenoid lipid ubiquinone.</title>
        <authorList>
            <person name="Hajj Chehade M."/>
            <person name="Pelosi L."/>
            <person name="Fyfe C.D."/>
            <person name="Loiseau L."/>
            <person name="Rascalou B."/>
            <person name="Brugiere S."/>
            <person name="Kazemzadeh K."/>
            <person name="Vo C.D."/>
            <person name="Ciccone L."/>
            <person name="Aussel L."/>
            <person name="Coute Y."/>
            <person name="Fontecave M."/>
            <person name="Barras F."/>
            <person name="Lombard M."/>
            <person name="Pierrel F."/>
        </authorList>
    </citation>
    <scope>SUBUNIT</scope>
    <scope>SUBCELLULAR LOCATION</scope>
</reference>
<gene>
    <name evidence="1 5" type="primary">ubiE</name>
    <name type="synonym">yigO</name>
    <name type="ordered locus">b3833</name>
    <name type="ordered locus">JW5581</name>
</gene>
<evidence type="ECO:0000255" key="1">
    <source>
        <dbReference type="HAMAP-Rule" id="MF_01813"/>
    </source>
</evidence>
<evidence type="ECO:0000269" key="2">
    <source>
    </source>
</evidence>
<evidence type="ECO:0000269" key="3">
    <source>
    </source>
</evidence>
<evidence type="ECO:0000269" key="4">
    <source>
    </source>
</evidence>
<evidence type="ECO:0000303" key="5">
    <source>
    </source>
</evidence>
<feature type="chain" id="PRO_0000193274" description="Ubiquinone/menaquinone biosynthesis C-methyltransferase UbiE">
    <location>
        <begin position="1"/>
        <end position="251"/>
    </location>
</feature>
<feature type="binding site" evidence="1">
    <location>
        <position position="74"/>
    </location>
    <ligand>
        <name>S-adenosyl-L-methionine</name>
        <dbReference type="ChEBI" id="CHEBI:59789"/>
    </ligand>
</feature>
<feature type="binding site" evidence="1">
    <location>
        <position position="95"/>
    </location>
    <ligand>
        <name>S-adenosyl-L-methionine</name>
        <dbReference type="ChEBI" id="CHEBI:59789"/>
    </ligand>
</feature>
<feature type="binding site" evidence="1">
    <location>
        <begin position="123"/>
        <end position="124"/>
    </location>
    <ligand>
        <name>S-adenosyl-L-methionine</name>
        <dbReference type="ChEBI" id="CHEBI:59789"/>
    </ligand>
</feature>
<feature type="binding site" evidence="1">
    <location>
        <position position="140"/>
    </location>
    <ligand>
        <name>S-adenosyl-L-methionine</name>
        <dbReference type="ChEBI" id="CHEBI:59789"/>
    </ligand>
</feature>
<feature type="mutagenesis site" description="In ubiE401; defective." evidence="4">
    <original>G</original>
    <variation>D</variation>
    <location>
        <position position="142"/>
    </location>
</feature>
<proteinExistence type="evidence at protein level"/>
<name>UBIE_ECOLI</name>
<comment type="function">
    <text evidence="2 4">Methyltransferase required for the conversion of demethylmenaquinol (DMKH2) to menaquinol (MKH2) and the conversion of 2-polyprenyl-6-methoxy-1,4-benzoquinol (DDMQH2) to 2-polyprenyl-3-methyl-6-methoxy-1,4-benzoquinol (DMQH2) (PubMed:9045837). In vitro, can use demethylphylloquinol, an intermediate in the biosynthesis of phylloquinone (vitamin K1) in plants and cyanobacteria (PubMed:26023160).</text>
</comment>
<comment type="catalytic activity">
    <reaction evidence="1 4">
        <text>a 2-demethylmenaquinol + S-adenosyl-L-methionine = a menaquinol + S-adenosyl-L-homocysteine + H(+)</text>
        <dbReference type="Rhea" id="RHEA:42640"/>
        <dbReference type="Rhea" id="RHEA-COMP:9539"/>
        <dbReference type="Rhea" id="RHEA-COMP:9563"/>
        <dbReference type="ChEBI" id="CHEBI:15378"/>
        <dbReference type="ChEBI" id="CHEBI:18151"/>
        <dbReference type="ChEBI" id="CHEBI:55437"/>
        <dbReference type="ChEBI" id="CHEBI:57856"/>
        <dbReference type="ChEBI" id="CHEBI:59789"/>
        <dbReference type="EC" id="2.1.1.163"/>
    </reaction>
</comment>
<comment type="catalytic activity">
    <reaction evidence="1 4">
        <text>a 2-methoxy-6-(all-trans-polyprenyl)benzene-1,4-diol + S-adenosyl-L-methionine = a 5-methoxy-2-methyl-3-(all-trans-polyprenyl)benzene-1,4-diol + S-adenosyl-L-homocysteine + H(+)</text>
        <dbReference type="Rhea" id="RHEA:28286"/>
        <dbReference type="Rhea" id="RHEA-COMP:10858"/>
        <dbReference type="Rhea" id="RHEA-COMP:10859"/>
        <dbReference type="ChEBI" id="CHEBI:15378"/>
        <dbReference type="ChEBI" id="CHEBI:57856"/>
        <dbReference type="ChEBI" id="CHEBI:59789"/>
        <dbReference type="ChEBI" id="CHEBI:84166"/>
        <dbReference type="ChEBI" id="CHEBI:84167"/>
        <dbReference type="EC" id="2.1.1.201"/>
    </reaction>
</comment>
<comment type="pathway">
    <text evidence="1 4">Quinol/quinone metabolism; menaquinone biosynthesis; menaquinol from 1,4-dihydroxy-2-naphthoate: step 2/2.</text>
</comment>
<comment type="pathway">
    <text evidence="1 4">Cofactor biosynthesis; ubiquinone biosynthesis.</text>
</comment>
<comment type="subunit">
    <text evidence="3">Component of the Ubi complex metabolon, which regroups five ubiquinone biosynthesis proteins (UbiE, UbiF, UbiG, UbiH and UbiI) and two accessory factors (UbiK and the lipid-binding protein UbiJ).</text>
</comment>
<comment type="subcellular location">
    <subcellularLocation>
        <location evidence="3">Cytoplasm</location>
    </subcellularLocation>
</comment>
<comment type="similarity">
    <text evidence="1">Belongs to the class I-like SAM-binding methyltransferase superfamily. MenG/UbiE family.</text>
</comment>
<accession>P0A887</accession>
<accession>P27851</accession>
<accession>Q2M8D8</accession>
<keyword id="KW-0963">Cytoplasm</keyword>
<keyword id="KW-0474">Menaquinone biosynthesis</keyword>
<keyword id="KW-0489">Methyltransferase</keyword>
<keyword id="KW-1185">Reference proteome</keyword>
<keyword id="KW-0949">S-adenosyl-L-methionine</keyword>
<keyword id="KW-0808">Transferase</keyword>
<keyword id="KW-0831">Ubiquinone biosynthesis</keyword>